<accession>Q320A9</accession>
<proteinExistence type="inferred from homology"/>
<comment type="subcellular location">
    <subcellularLocation>
        <location evidence="1">Cell inner membrane</location>
        <topology evidence="1">Multi-pass membrane protein</topology>
    </subcellularLocation>
</comment>
<comment type="similarity">
    <text evidence="1">Belongs to the UPF0283 family.</text>
</comment>
<protein>
    <recommendedName>
        <fullName evidence="1">UPF0283 membrane protein YcjF</fullName>
    </recommendedName>
</protein>
<evidence type="ECO:0000255" key="1">
    <source>
        <dbReference type="HAMAP-Rule" id="MF_01085"/>
    </source>
</evidence>
<sequence length="353" mass="39377">MTEPLKPRIDFDGPLEVDQNPKFRAQQTFDENQAQNFAPATLDEAPEEEGQVEAVMDAALRPKRSLWRKMVMGGLALFGASVVGQGVQWTMNAWQTQDWVALGGCAAGALIIGAGVGSVVTEWRRLWRLRQRAHERDEARDLLHSHGTGKGRAFCEKLAQQAGIDQSHPALQRWYASIHETQNDREVVSLYAHLVQPVLDAQARREICRSAAESTLMIAVSPLALVDMAFIAWRNLRLINRIATLYGIELGYYSRLRLFKLVLLNIAFAGASELVREVGMDWMSQDLAARLSTRAAQGIGAGLLTARLGIKAMELCRPLPWIDDDKPRLGDFRRQLIGQVKETLQKGKTPSEK</sequence>
<keyword id="KW-0997">Cell inner membrane</keyword>
<keyword id="KW-1003">Cell membrane</keyword>
<keyword id="KW-0472">Membrane</keyword>
<keyword id="KW-0812">Transmembrane</keyword>
<keyword id="KW-1133">Transmembrane helix</keyword>
<organism>
    <name type="scientific">Shigella boydii serotype 4 (strain Sb227)</name>
    <dbReference type="NCBI Taxonomy" id="300268"/>
    <lineage>
        <taxon>Bacteria</taxon>
        <taxon>Pseudomonadati</taxon>
        <taxon>Pseudomonadota</taxon>
        <taxon>Gammaproteobacteria</taxon>
        <taxon>Enterobacterales</taxon>
        <taxon>Enterobacteriaceae</taxon>
        <taxon>Shigella</taxon>
    </lineage>
</organism>
<gene>
    <name evidence="1" type="primary">ycjF</name>
    <name type="ordered locus">SBO_1748</name>
</gene>
<feature type="chain" id="PRO_1000064850" description="UPF0283 membrane protein YcjF">
    <location>
        <begin position="1"/>
        <end position="353"/>
    </location>
</feature>
<feature type="transmembrane region" description="Helical" evidence="1">
    <location>
        <begin position="70"/>
        <end position="90"/>
    </location>
</feature>
<feature type="transmembrane region" description="Helical" evidence="1">
    <location>
        <begin position="100"/>
        <end position="120"/>
    </location>
</feature>
<feature type="transmembrane region" description="Helical" evidence="1">
    <location>
        <begin position="213"/>
        <end position="233"/>
    </location>
</feature>
<dbReference type="EMBL" id="CP000036">
    <property type="protein sequence ID" value="ABB66349.1"/>
    <property type="molecule type" value="Genomic_DNA"/>
</dbReference>
<dbReference type="RefSeq" id="WP_000138711.1">
    <property type="nucleotide sequence ID" value="NC_007613.1"/>
</dbReference>
<dbReference type="SMR" id="Q320A9"/>
<dbReference type="KEGG" id="sbo:SBO_1748"/>
<dbReference type="HOGENOM" id="CLU_057693_2_0_6"/>
<dbReference type="Proteomes" id="UP000007067">
    <property type="component" value="Chromosome"/>
</dbReference>
<dbReference type="GO" id="GO:0005886">
    <property type="term" value="C:plasma membrane"/>
    <property type="evidence" value="ECO:0007669"/>
    <property type="project" value="UniProtKB-SubCell"/>
</dbReference>
<dbReference type="HAMAP" id="MF_01085">
    <property type="entry name" value="UPF0283"/>
    <property type="match status" value="1"/>
</dbReference>
<dbReference type="InterPro" id="IPR021147">
    <property type="entry name" value="DUF697"/>
</dbReference>
<dbReference type="InterPro" id="IPR006507">
    <property type="entry name" value="UPF0283"/>
</dbReference>
<dbReference type="NCBIfam" id="TIGR01620">
    <property type="entry name" value="hyp_HI0043"/>
    <property type="match status" value="1"/>
</dbReference>
<dbReference type="PANTHER" id="PTHR39342">
    <property type="entry name" value="UPF0283 MEMBRANE PROTEIN YCJF"/>
    <property type="match status" value="1"/>
</dbReference>
<dbReference type="PANTHER" id="PTHR39342:SF1">
    <property type="entry name" value="UPF0283 MEMBRANE PROTEIN YCJF"/>
    <property type="match status" value="1"/>
</dbReference>
<dbReference type="Pfam" id="PF05128">
    <property type="entry name" value="DUF697"/>
    <property type="match status" value="1"/>
</dbReference>
<name>YCJF_SHIBS</name>
<reference key="1">
    <citation type="journal article" date="2005" name="Nucleic Acids Res.">
        <title>Genome dynamics and diversity of Shigella species, the etiologic agents of bacillary dysentery.</title>
        <authorList>
            <person name="Yang F."/>
            <person name="Yang J."/>
            <person name="Zhang X."/>
            <person name="Chen L."/>
            <person name="Jiang Y."/>
            <person name="Yan Y."/>
            <person name="Tang X."/>
            <person name="Wang J."/>
            <person name="Xiong Z."/>
            <person name="Dong J."/>
            <person name="Xue Y."/>
            <person name="Zhu Y."/>
            <person name="Xu X."/>
            <person name="Sun L."/>
            <person name="Chen S."/>
            <person name="Nie H."/>
            <person name="Peng J."/>
            <person name="Xu J."/>
            <person name="Wang Y."/>
            <person name="Yuan Z."/>
            <person name="Wen Y."/>
            <person name="Yao Z."/>
            <person name="Shen Y."/>
            <person name="Qiang B."/>
            <person name="Hou Y."/>
            <person name="Yu J."/>
            <person name="Jin Q."/>
        </authorList>
    </citation>
    <scope>NUCLEOTIDE SEQUENCE [LARGE SCALE GENOMIC DNA]</scope>
    <source>
        <strain>Sb227</strain>
    </source>
</reference>